<accession>Q9RFR0</accession>
<dbReference type="EC" id="2.4.1.269" evidence="1 2 3"/>
<dbReference type="EMBL" id="AF173987">
    <property type="protein sequence ID" value="AAF16905.1"/>
    <property type="molecule type" value="Genomic_DNA"/>
</dbReference>
<dbReference type="RefSeq" id="WP_012843722.1">
    <property type="nucleotide sequence ID" value="NZ_CP172416.1"/>
</dbReference>
<dbReference type="PDB" id="2BO4">
    <property type="method" value="X-ray"/>
    <property type="resolution" value="1.95 A"/>
    <property type="chains" value="A/B/C/D/E/F=1-397"/>
</dbReference>
<dbReference type="PDB" id="2BO6">
    <property type="method" value="X-ray"/>
    <property type="resolution" value="2.45 A"/>
    <property type="chains" value="A/B=1-397"/>
</dbReference>
<dbReference type="PDB" id="2BO7">
    <property type="method" value="X-ray"/>
    <property type="resolution" value="2.95 A"/>
    <property type="chains" value="A/B/C/D/E/F/G/H/I/J=1-397"/>
</dbReference>
<dbReference type="PDB" id="2BO8">
    <property type="method" value="X-ray"/>
    <property type="resolution" value="2.80 A"/>
    <property type="chains" value="A/B/C/D/E/F/G/H/I/J=1-397"/>
</dbReference>
<dbReference type="PDB" id="2Y4J">
    <property type="method" value="X-ray"/>
    <property type="resolution" value="2.30 A"/>
    <property type="chains" value="A/B=1-382"/>
</dbReference>
<dbReference type="PDBsum" id="2BO4"/>
<dbReference type="PDBsum" id="2BO6"/>
<dbReference type="PDBsum" id="2BO7"/>
<dbReference type="PDBsum" id="2BO8"/>
<dbReference type="PDBsum" id="2Y4J"/>
<dbReference type="SMR" id="Q9RFR0"/>
<dbReference type="DIP" id="DIP-60494N"/>
<dbReference type="CAZy" id="GT78">
    <property type="family name" value="Glycosyltransferase Family 78"/>
</dbReference>
<dbReference type="OMA" id="RIHFYDA"/>
<dbReference type="BioCyc" id="MetaCyc:MONOMER-13377"/>
<dbReference type="BRENDA" id="2.4.1.269">
    <property type="organism ID" value="5425"/>
</dbReference>
<dbReference type="SABIO-RK" id="Q9RFR0"/>
<dbReference type="EvolutionaryTrace" id="Q9RFR0"/>
<dbReference type="PRO" id="PR:Q9RFR0"/>
<dbReference type="GO" id="GO:0016758">
    <property type="term" value="F:hexosyltransferase activity"/>
    <property type="evidence" value="ECO:0000314"/>
    <property type="project" value="UniProtKB"/>
</dbReference>
<dbReference type="GO" id="GO:0042802">
    <property type="term" value="F:identical protein binding"/>
    <property type="evidence" value="ECO:0000353"/>
    <property type="project" value="IntAct"/>
</dbReference>
<dbReference type="GO" id="GO:0102921">
    <property type="term" value="F:mannosylglycerate synthase activity"/>
    <property type="evidence" value="ECO:0007669"/>
    <property type="project" value="UniProtKB-EC"/>
</dbReference>
<dbReference type="GO" id="GO:0046872">
    <property type="term" value="F:metal ion binding"/>
    <property type="evidence" value="ECO:0000314"/>
    <property type="project" value="UniProtKB"/>
</dbReference>
<dbReference type="GO" id="GO:0051479">
    <property type="term" value="P:mannosylglycerate biosynthetic process"/>
    <property type="evidence" value="ECO:0000314"/>
    <property type="project" value="CACAO"/>
</dbReference>
<dbReference type="Gene3D" id="3.90.550.10">
    <property type="entry name" value="Spore Coat Polysaccharide Biosynthesis Protein SpsA, Chain A"/>
    <property type="match status" value="2"/>
</dbReference>
<dbReference type="InterPro" id="IPR054143">
    <property type="entry name" value="MGS_C"/>
</dbReference>
<dbReference type="InterPro" id="IPR054145">
    <property type="entry name" value="MGS_GT"/>
</dbReference>
<dbReference type="InterPro" id="IPR029044">
    <property type="entry name" value="Nucleotide-diphossugar_trans"/>
</dbReference>
<dbReference type="Pfam" id="PF21967">
    <property type="entry name" value="MGS_C"/>
    <property type="match status" value="1"/>
</dbReference>
<dbReference type="Pfam" id="PF21969">
    <property type="entry name" value="MGS_GT"/>
    <property type="match status" value="1"/>
</dbReference>
<dbReference type="SUPFAM" id="SSF53448">
    <property type="entry name" value="Nucleotide-diphospho-sugar transferases"/>
    <property type="match status" value="1"/>
</dbReference>
<evidence type="ECO:0000269" key="1">
    <source>
    </source>
</evidence>
<evidence type="ECO:0000269" key="2">
    <source>
    </source>
</evidence>
<evidence type="ECO:0000269" key="3">
    <source>
    </source>
</evidence>
<evidence type="ECO:0000305" key="4"/>
<evidence type="ECO:0000305" key="5">
    <source>
    </source>
</evidence>
<evidence type="ECO:0007829" key="6">
    <source>
        <dbReference type="PDB" id="2BO4"/>
    </source>
</evidence>
<proteinExistence type="evidence at protein level"/>
<organism>
    <name type="scientific">Rhodothermus marinus</name>
    <name type="common">Rhodothermus obamensis</name>
    <dbReference type="NCBI Taxonomy" id="29549"/>
    <lineage>
        <taxon>Bacteria</taxon>
        <taxon>Pseudomonadati</taxon>
        <taxon>Rhodothermota</taxon>
        <taxon>Rhodothermia</taxon>
        <taxon>Rhodothermales</taxon>
        <taxon>Rhodothermaceae</taxon>
        <taxon>Rhodothermus</taxon>
    </lineage>
</organism>
<name>MGS_RHOMR</name>
<comment type="function">
    <text evidence="1 2 3">Involved in the biosynthesis of the stress protectant 2-O-alpha-D-mannosyl glycerate (MG) which is produced in response to growth at supraoptimal temperature and salinity, and protects several enzymes against inactivation by temperature, freeze-drying and osmotic stress. Catalyzes the condensation of alpha-GDP-D-mannose (GDP-Man) with D-glycerate to produce alpha-mannosyl-D-glycerate. It is specific for GDP-Man, but it can also use alpha-GDP-D-glucose (GDP-Glc), beta-GDP-D-fructose, alpha-UDP-D-mannose and alpha-UDP-D-glucose as sugar donors. It is specific for D-glycerate, but it can also use D-lactate and glycolate as sugar acceptors. This reaction occurs with a net retention of anomeric configuration; the newly formed glycosidic linkage has the same alpha configuration as the sugar donor.</text>
</comment>
<comment type="catalytic activity">
    <reaction evidence="1 2 3">
        <text>(R)-glycerate + GDP-alpha-D-mannose = (2R)-2-O-(alpha-D-mannosyl)-glycerate + GDP + H(+)</text>
        <dbReference type="Rhea" id="RHEA:30639"/>
        <dbReference type="ChEBI" id="CHEBI:15378"/>
        <dbReference type="ChEBI" id="CHEBI:16659"/>
        <dbReference type="ChEBI" id="CHEBI:57527"/>
        <dbReference type="ChEBI" id="CHEBI:57541"/>
        <dbReference type="ChEBI" id="CHEBI:58189"/>
        <dbReference type="EC" id="2.4.1.269"/>
    </reaction>
</comment>
<comment type="cofactor">
    <cofactor evidence="3">
        <name>Mg(2+)</name>
        <dbReference type="ChEBI" id="CHEBI:18420"/>
    </cofactor>
    <cofactor evidence="3">
        <name>Ca(2+)</name>
        <dbReference type="ChEBI" id="CHEBI:29108"/>
    </cofactor>
    <cofactor evidence="3">
        <name>Mn(2+)</name>
        <dbReference type="ChEBI" id="CHEBI:29035"/>
    </cofactor>
    <cofactor evidence="3">
        <name>Ni(2+)</name>
        <dbReference type="ChEBI" id="CHEBI:49786"/>
    </cofactor>
    <cofactor evidence="3">
        <name>Co(2+)</name>
        <dbReference type="ChEBI" id="CHEBI:48828"/>
    </cofactor>
    <text evidence="3">Divalent cations such as magnesium, calcium and to a lesser extent manganese, nickel and cobalt.</text>
</comment>
<comment type="activity regulation">
    <text evidence="3">Inhibited by GDP.</text>
</comment>
<comment type="biophysicochemical properties">
    <kinetics>
        <KM evidence="1 2 3">2.2 uM for D-glycerate</KM>
        <KM evidence="1 2 3">3.1 uM for GDP-Man</KM>
        <KM evidence="1 2 3">81.2 uM for GDP-Man (in the presence of calcium ions at 25 degrees Celsius)</KM>
        <KM evidence="1 2 3">89.4 uM for GDP-Man (in the presence of calcium ions at 65 degrees Celsius)</KM>
        <KM evidence="1 2 3">96.5 uM for D-glycerate (in the presence of calcium ions at 65 degrees Celsius)</KM>
        <KM evidence="1 2 3">121.9 uM for D-glycerate (in the presence of calcium ions at 25 degrees Celsius)</KM>
        <KM evidence="1 2 3">124.9 uM for GDP-Glc (in the presence of calcium ions at 25 degrees Celsius)</KM>
        <KM evidence="1 2 3">138.6 uM for GDP-Glc (in the presence of calcium ions at 65 degrees Celsius)</KM>
        <KM evidence="1 2 3">300 uM for GDP-Man (at 90 degrees Celsius)</KM>
        <KM evidence="1 2 3">600 uM for D-glycerate (at 90 degrees Celsius (PubMed:10585410))</KM>
        <text evidence="2 3">kcat is 6.5 sec(-1) for mannosylglycerate synthase activity with D-glycerate as sugar acceptor (in the presence of calcium ions at 65 degrees Celsius) (PubMed:15951819). kcat is 6.1 sec(-1) for mannosylglycerate synthase activity with GDP-Man as sugar donor (in the presence of calcium ions at 65 degrees Celsius) (PubMed:15951819). kcat is 1.9 sec(-1) for mannosylglycerate synthase activity with D-glycerate (PubMed:21288903). kcat is 1.1 sec(-1) for mannosylglycerate synthase activity with GDP-Glc as sugar donor (in the presence of calcium ions at 65 degrees Celsius) (PubMed:15951819). kcat is 1.02 sec(-1) for mannosylglycerate synthase activity with GDP-Man and D-glycerate as sugar donor and acceptor, respectively (in the presence of calcium ions at 25 degrees Celsius) (PubMed:15951819). kcat is 0.63 sec(-1) for mannosylglycerate synthase activity with GDP-Glc as sugar donor (in the presence of calcium ions at 25 degrees Celsius) (PubMed:15951819).</text>
    </kinetics>
    <phDependence>
        <text evidence="1 2 3">Optimum pH is between 5.5 and 7.</text>
    </phDependence>
    <temperatureDependence>
        <text evidence="1 2 3">Optimum temperature is between 85 and 90 degrees Celsius. It is stable at high temperatures, however at 90 degrees Celsius the stability of the enzyme is only moderate and 50% of the activity is lost after 30 minutes incubation. At 65 degrees Celsius, the specific enzymatic activity is 5-fold lower than the maximum value.</text>
    </temperatureDependence>
</comment>
<comment type="subunit">
    <text evidence="2 3">Homotetramer. Dimer of dimers.</text>
</comment>
<comment type="interaction">
    <interactant intactId="EBI-15553684">
        <id>Q9RFR0</id>
    </interactant>
    <interactant intactId="EBI-15553684">
        <id>Q9RFR0</id>
        <label>mgs</label>
    </interactant>
    <organismsDiffer>false</organismsDiffer>
    <experiments>3</experiments>
</comment>
<comment type="miscellaneous">
    <text evidence="5">The biosynthesis of mannosylglycerate in R.marinus can proceed via an other alternative pathway, in which a mannosyl-3-phosphoglycerate synthase catalyzes the conversion of GDP mannose and D-3-phosphoglycerate into a phosphorylated intermediate, which is subsequently converted to mannosylglycerate by the action of a mannosyl-3-phosphoglycerate phosphatase. A noticeable feature distinguishing the two enzymatic systems involved in the synthesis of MG is their dependence on salt; while the mannosylglycerate synthase reaction is salt-independent, addition of NaCl or KCl is required to achieve full activity of the mannosyl-3-phosphoglycerate synthase/phosphatase system (PubMed:10585410).</text>
</comment>
<comment type="similarity">
    <text evidence="4">Belongs to the glycosyltransferase 78 family.</text>
</comment>
<gene>
    <name type="primary">mgs</name>
</gene>
<feature type="initiator methionine" description="Removed" evidence="1">
    <location>
        <position position="1"/>
    </location>
</feature>
<feature type="chain" id="PRO_0000429861" description="Mannosylglycerate synthase">
    <location>
        <begin position="2"/>
        <end position="397"/>
    </location>
</feature>
<feature type="binding site">
    <location>
        <begin position="7"/>
        <end position="11"/>
    </location>
    <ligand>
        <name>GDP-alpha-D-mannose</name>
        <dbReference type="ChEBI" id="CHEBI:57527"/>
    </ligand>
</feature>
<feature type="binding site">
    <location>
        <position position="35"/>
    </location>
    <ligand>
        <name>GDP-alpha-D-mannose</name>
        <dbReference type="ChEBI" id="CHEBI:57527"/>
    </ligand>
</feature>
<feature type="binding site">
    <location>
        <position position="66"/>
    </location>
    <ligand>
        <name>GDP-alpha-D-mannose</name>
        <dbReference type="ChEBI" id="CHEBI:57527"/>
    </ligand>
</feature>
<feature type="binding site">
    <location>
        <position position="76"/>
    </location>
    <ligand>
        <name>GDP-alpha-D-mannose</name>
        <dbReference type="ChEBI" id="CHEBI:57527"/>
    </ligand>
</feature>
<feature type="binding site">
    <location>
        <begin position="100"/>
        <end position="101"/>
    </location>
    <ligand>
        <name>GDP-alpha-D-mannose</name>
        <dbReference type="ChEBI" id="CHEBI:57527"/>
    </ligand>
</feature>
<feature type="binding site">
    <location>
        <position position="100"/>
    </location>
    <ligand>
        <name>GDP-alpha-D-mannose</name>
        <dbReference type="ChEBI" id="CHEBI:57527"/>
    </ligand>
</feature>
<feature type="binding site">
    <location>
        <position position="102"/>
    </location>
    <ligand>
        <name>a divalent metal cation</name>
        <dbReference type="ChEBI" id="CHEBI:60240"/>
    </ligand>
</feature>
<feature type="binding site">
    <location>
        <position position="131"/>
    </location>
    <ligand>
        <name>(R)-glycerate</name>
        <dbReference type="ChEBI" id="CHEBI:16659"/>
    </ligand>
</feature>
<feature type="binding site">
    <location>
        <begin position="136"/>
        <end position="139"/>
    </location>
    <ligand>
        <name>(R)-glycerate</name>
        <dbReference type="ChEBI" id="CHEBI:16659"/>
    </ligand>
</feature>
<feature type="binding site">
    <location>
        <position position="163"/>
    </location>
    <ligand>
        <name>GDP-alpha-D-mannose</name>
        <dbReference type="ChEBI" id="CHEBI:57527"/>
    </ligand>
</feature>
<feature type="binding site">
    <location>
        <position position="192"/>
    </location>
    <ligand>
        <name>GDP-alpha-D-mannose</name>
        <dbReference type="ChEBI" id="CHEBI:57527"/>
    </ligand>
</feature>
<feature type="binding site">
    <location>
        <position position="217"/>
    </location>
    <ligand>
        <name>a divalent metal cation</name>
        <dbReference type="ChEBI" id="CHEBI:60240"/>
    </ligand>
</feature>
<feature type="binding site">
    <location>
        <position position="218"/>
    </location>
    <ligand>
        <name>GDP-alpha-D-mannose</name>
        <dbReference type="ChEBI" id="CHEBI:57527"/>
    </ligand>
</feature>
<feature type="binding site">
    <location>
        <position position="220"/>
    </location>
    <ligand>
        <name>GDP-alpha-D-mannose</name>
        <dbReference type="ChEBI" id="CHEBI:57527"/>
    </ligand>
</feature>
<feature type="mutagenesis site" description="The catalytic efficiency is almost one order of magnitude higher than wild-type enzyme for both substrates. The mutation has little effect on the affinity binding value for GDP-Man and D-glycerate." evidence="3">
    <original>K</original>
    <variation>A</variation>
    <location>
        <position position="9"/>
    </location>
</feature>
<feature type="mutagenesis site" description="Results in a modest increase in the catalytic efficiency coupled with a decrease in the affinity binding value for GDP-Man." evidence="2">
    <original>E</original>
    <variation>A</variation>
    <location>
        <position position="11"/>
    </location>
</feature>
<feature type="mutagenesis site" description="Significant increase in catalytic efficiency. The mutation has little effect on the affinity binding value for GDP-Man, however it shows an 4-fold decrease in the affinity binding value for D-glycerate." evidence="3">
    <original>Y</original>
    <variation>A</variation>
    <location>
        <position position="37"/>
    </location>
</feature>
<feature type="mutagenesis site" description="Results in an increase in the catalytic efficiency (up to 72-fold) coupled with a decrease in the affinity binding for both D-glycerate and GDP-Man." evidence="3">
    <original>Q</original>
    <variation>A</variation>
    <location>
        <position position="66"/>
    </location>
</feature>
<feature type="mutagenesis site" description="Results in a 3-fold increase in the catalytic efficiency coupled with a decrease in affinity binding for D-glycerate and GDP-Man of 15- and 3-fold, respectively." evidence="3">
    <original>K</original>
    <variation>A</variation>
    <location>
        <position position="76"/>
    </location>
</feature>
<feature type="mutagenesis site" description="Completely inactive." evidence="2">
    <original>D</original>
    <variation>A</variation>
    <location>
        <position position="100"/>
    </location>
</feature>
<feature type="mutagenesis site" description="Completely inactive." evidence="3">
    <original>D</original>
    <variation>A</variation>
    <location>
        <position position="102"/>
    </location>
</feature>
<feature type="mutagenesis site" description="Completely inactive." evidence="2">
    <original>R</original>
    <variation>A</variation>
    <location>
        <position position="131"/>
    </location>
</feature>
<feature type="mutagenesis site" description="Results in a extremely low affinity binding value for D-glycerate (5600-fold lower than wild-type) and displays a slight increase in the catalytic efficiency (2-fold) compared with wild-type enzyme." evidence="3">
    <original>D</original>
    <variation>A</variation>
    <location>
        <position position="135"/>
    </location>
</feature>
<feature type="mutagenesis site" description="Results in a modest decrease in the catalytic efficiency coupled with a 1500-fold decrease in the affinity binding value for D-glycerate. The mutant is 500-fold less active when D-lactate, rather than D-glycerate, is the acceptor substrate." evidence="3">
    <original>T</original>
    <variation>A</variation>
    <location>
        <position position="139"/>
    </location>
</feature>
<feature type="mutagenesis site" description="Results in a 3-fold increase in the catalytic efficiency coupled with a 7-fold decrease in the affinity binding for D-glycerate compared with the wild-type enzyme. It does not influence utilization of GDP-Man." evidence="3">
    <original>W</original>
    <variation>A</variation>
    <location>
        <position position="189"/>
    </location>
</feature>
<feature type="mutagenesis site" description="Completely inactive." evidence="3">
    <original>D</original>
    <variation>A</variation>
    <location>
        <position position="192"/>
    </location>
</feature>
<feature type="mutagenesis site" description="Displays a significant change in metal preference. This mutant is essentially inactive in the presence of calcium ions (specific activity 1000-fold lower than wild-type), whereas the catalytic efficiency value is 23-fold lower in the presence of magnesium ions." evidence="3">
    <original>H</original>
    <variation>A</variation>
    <location>
        <position position="217"/>
    </location>
</feature>
<feature type="mutagenesis site" description="Results in a significant increase in the catalytic efficiency coupled with a decrease in the affinity binding value for GDP-Man. It has only a modest influence on the affinity binding value for D-glycerate." evidence="3">
    <original>R</original>
    <variation>A</variation>
    <location>
        <position position="218"/>
    </location>
</feature>
<feature type="mutagenesis site" description="Results in a 500-fold decrease in the affinity binding value for D-glycerate in the presence of saturating GDP-Man." evidence="3">
    <original>Y</original>
    <variation>A</variation>
    <location>
        <position position="220"/>
    </location>
</feature>
<feature type="mutagenesis site" description="Results in a 1500-fold decrease in the affinity binding value for D-glycerate in the presence of saturating GDP-Man." evidence="3">
    <original>Y</original>
    <variation>F</variation>
    <location>
        <position position="220"/>
    </location>
</feature>
<feature type="mutagenesis site" description="Minor influence." evidence="3">
    <original>M</original>
    <variation>A</variation>
    <location>
        <position position="229"/>
    </location>
</feature>
<feature type="strand" evidence="6">
    <location>
        <begin position="3"/>
        <end position="7"/>
    </location>
</feature>
<feature type="helix" evidence="6">
    <location>
        <begin position="13"/>
        <end position="25"/>
    </location>
</feature>
<feature type="strand" evidence="6">
    <location>
        <begin position="31"/>
        <end position="38"/>
    </location>
</feature>
<feature type="helix" evidence="6">
    <location>
        <begin position="41"/>
        <end position="57"/>
    </location>
</feature>
<feature type="strand" evidence="6">
    <location>
        <begin position="61"/>
        <end position="65"/>
    </location>
</feature>
<feature type="strand" evidence="6">
    <location>
        <begin position="70"/>
        <end position="75"/>
    </location>
</feature>
<feature type="helix" evidence="6">
    <location>
        <begin position="76"/>
        <end position="90"/>
    </location>
</feature>
<feature type="strand" evidence="6">
    <location>
        <begin position="94"/>
        <end position="98"/>
    </location>
</feature>
<feature type="helix" evidence="6">
    <location>
        <begin position="108"/>
        <end position="119"/>
    </location>
</feature>
<feature type="strand" evidence="6">
    <location>
        <begin position="123"/>
        <end position="128"/>
    </location>
</feature>
<feature type="helix" evidence="6">
    <location>
        <begin position="137"/>
        <end position="141"/>
    </location>
</feature>
<feature type="helix" evidence="6">
    <location>
        <begin position="143"/>
        <end position="150"/>
    </location>
</feature>
<feature type="helix" evidence="6">
    <location>
        <begin position="156"/>
        <end position="158"/>
    </location>
</feature>
<feature type="strand" evidence="6">
    <location>
        <begin position="167"/>
        <end position="170"/>
    </location>
</feature>
<feature type="helix" evidence="6">
    <location>
        <begin position="171"/>
        <end position="179"/>
    </location>
</feature>
<feature type="helix" evidence="6">
    <location>
        <begin position="181"/>
        <end position="184"/>
    </location>
</feature>
<feature type="helix" evidence="6">
    <location>
        <begin position="191"/>
        <end position="201"/>
    </location>
</feature>
<feature type="strand" evidence="6">
    <location>
        <begin position="206"/>
        <end position="210"/>
    </location>
</feature>
<feature type="helix" evidence="6">
    <location>
        <begin position="223"/>
        <end position="226"/>
    </location>
</feature>
<feature type="helix" evidence="6">
    <location>
        <begin position="227"/>
        <end position="240"/>
    </location>
</feature>
<feature type="strand" evidence="6">
    <location>
        <begin position="251"/>
        <end position="253"/>
    </location>
</feature>
<feature type="helix" evidence="6">
    <location>
        <begin position="261"/>
        <end position="264"/>
    </location>
</feature>
<feature type="helix" evidence="6">
    <location>
        <begin position="271"/>
        <end position="278"/>
    </location>
</feature>
<feature type="helix" evidence="6">
    <location>
        <begin position="284"/>
        <end position="289"/>
    </location>
</feature>
<feature type="helix" evidence="6">
    <location>
        <begin position="290"/>
        <end position="292"/>
    </location>
</feature>
<feature type="helix" evidence="6">
    <location>
        <begin position="295"/>
        <end position="303"/>
    </location>
</feature>
<feature type="turn" evidence="6">
    <location>
        <begin position="304"/>
        <end position="306"/>
    </location>
</feature>
<feature type="helix" evidence="6">
    <location>
        <begin position="315"/>
        <end position="328"/>
    </location>
</feature>
<feature type="helix" evidence="6">
    <location>
        <begin position="334"/>
        <end position="354"/>
    </location>
</feature>
<feature type="helix" evidence="6">
    <location>
        <begin position="356"/>
        <end position="358"/>
    </location>
</feature>
<feature type="helix" evidence="6">
    <location>
        <begin position="360"/>
        <end position="380"/>
    </location>
</feature>
<sequence length="397" mass="46126">MSLVVFPFKHEHPEVLLHNVRVAAAHPRVHEVLCIGYERDQTYEAVERAAPEISRATGTPVSVRLQERLGTLRPGKGDGMNTALRYFLEETQWERIHFYDADITSFGPDWITKAEEAADFGYGLVRHYFPRASTDAMITWMITRTGFALLWPHTELSWIEQPLGGELLMRREVAAMLYEDERVRRRSDWGIDTLYTFVTVQQGVSIYECYIPEGKAHRLYGGLDDLRTMLVECFAAIQSLQHEVVGQPAIHRQEHPHRVPVHIAERVGYDVEATLHRLMQHWTPRQVELLELFTTPVREGLRTCQRRPAFNFMDEMAWAATYHVLLEHFQPGDPDWEELLFKLWTTRVLNYTMTVALRGYDYAQQYLYRMLGRYRYQAALENGRGHPVPPRAALSTA</sequence>
<keyword id="KW-0002">3D-structure</keyword>
<keyword id="KW-0106">Calcium</keyword>
<keyword id="KW-0170">Cobalt</keyword>
<keyword id="KW-0903">Direct protein sequencing</keyword>
<keyword id="KW-0460">Magnesium</keyword>
<keyword id="KW-0464">Manganese</keyword>
<keyword id="KW-0479">Metal-binding</keyword>
<keyword id="KW-0533">Nickel</keyword>
<keyword id="KW-0808">Transferase</keyword>
<protein>
    <recommendedName>
        <fullName>Mannosylglycerate synthase</fullName>
        <shortName>MGS</shortName>
        <ecNumber evidence="1 2 3">2.4.1.269</ecNumber>
    </recommendedName>
</protein>
<reference key="1">
    <citation type="journal article" date="1999" name="J. Biol. Chem.">
        <title>Biosynthesis of mannosylglycerate in the thermophilic bacterium Rhodothermus marinus. Biochemical and genetic characterization of a mannosylglycerate synthase.</title>
        <authorList>
            <person name="Martins L.O."/>
            <person name="Empadinhas N."/>
            <person name="Marugg J.D."/>
            <person name="Miguel C."/>
            <person name="Ferreira C."/>
            <person name="da Costa M.S."/>
            <person name="Santos H."/>
        </authorList>
    </citation>
    <scope>NUCLEOTIDE SEQUENCE [GENOMIC DNA]</scope>
    <scope>PROTEIN SEQUENCE OF 2-30</scope>
    <scope>FUNCTION</scope>
    <scope>CATALYTIC ACTIVITY</scope>
    <scope>BIOPHYSICOCHEMICAL PROPERTIES</scope>
    <scope>SUBSTRATE SPECIFICITY</scope>
    <source>
        <strain>ATCC 43812 / R-10 / DSM 4252</strain>
    </source>
</reference>
<reference key="2">
    <citation type="journal article" date="2005" name="Nat. Struct. Mol. Biol.">
        <title>Structural dissection and high-throughput screening of mannosylglycerate synthase.</title>
        <authorList>
            <person name="Flint J."/>
            <person name="Taylor E."/>
            <person name="Yang M."/>
            <person name="Bolam D.N."/>
            <person name="Tailford L.E."/>
            <person name="Martinez-Fleites C."/>
            <person name="Dodson E.J."/>
            <person name="Davis B.G."/>
            <person name="Gilbert H.J."/>
            <person name="Davies G.J."/>
        </authorList>
    </citation>
    <scope>X-RAY CRYSTALLOGRAPHY (1.95 ANGSTROMS) IN COMPLEX WITH SUBSTRATE ANALOGS AND DIVALENT CATIONS</scope>
    <scope>FUNCTION</scope>
    <scope>CATALYTIC ACTIVITY</scope>
    <scope>MUTAGENESIS OF GLU-11; ASP-100 AND ARG-131</scope>
    <scope>BIOPHYSICOCHEMICAL PROPERTIES</scope>
    <scope>SUBSTRATE SPECIFICITY</scope>
    <scope>SUBUNIT</scope>
</reference>
<reference key="3">
    <citation type="journal article" date="2011" name="J. Biol. Chem.">
        <title>Substrate and metal ion promiscuity in mannosylglycerate synthase.</title>
        <authorList>
            <person name="Nielsen M.M."/>
            <person name="Suits M.D."/>
            <person name="Yang M."/>
            <person name="Barry C.S."/>
            <person name="Martinez-Fleites C."/>
            <person name="Tailford L.E."/>
            <person name="Flint J.E."/>
            <person name="Dumon C."/>
            <person name="Davis B.G."/>
            <person name="Gilbert H.J."/>
            <person name="Davies G.J."/>
        </authorList>
    </citation>
    <scope>X-RAY CRYSTALLOGRAPHY (2.3 ANGSTROMS) OF 1-382 IN COMPLEX WITH SUBSTRATE ANALOGS</scope>
    <scope>FUNCTION</scope>
    <scope>CATALYTIC ACTIVITY</scope>
    <scope>MUTAGENESIS OF LYS-9; TYR-37; GLN-66; LYS-76; ASP-102; ASP-135; THR-139; TRP-189; ASP-192; HIS-217; ARG-218; TYR-220 AND MET-229</scope>
    <scope>BIOPHYSICOCHEMICAL PROPERTIES</scope>
    <scope>ACTIVITY REGULATION</scope>
    <scope>COFACTOR</scope>
    <scope>SUBUNIT</scope>
</reference>